<sequence>RIFRLKKDIFRQQNFVYPLLLQEYIYSLAHYHSFNSLIFYEPVEIIGYDNKFSLVLVKRLITRMYQQKSLISSVNDSNQNEFWGHKNSFSSHFSSQMVSEGFGVILEIPFSSRLVSSLEEKRIPKSQNLRSIHSIFPFLEDKLLHLNYVSDLLIPHPIHLEILVQILQCWIKDVPSLHLLRLFFHEYHNLNSLITSKKSIYVFSKRKKRFFWFLHNSYVYECEYIFLFLRKQSSYLRSISSGVFLERTHFYGKIEYLTVVCCNSFQRILWFLKDTFIHYVRYQGKAILASKGTLILIKKWKFHLVNFWQSYFHFWFQPYRIHIKQLPNYSFSFLGYFSSVLKNPLIVRNQMLENSFLINTLTTKLDTIAPVISIIGSLSKAQFCTVLGHPISKPIWTNLSDSDILDQFCRICRNLCRYHSGSSNKQVLYRIKYILRLSCARTLARKHKSTVRTFMRRLGSGFLEEFFLEEEQSLSLIFLQKIPFPLHGLHRERIWYLDIIRINDLVDHS</sequence>
<reference key="1">
    <citation type="journal article" date="2001" name="Am. J. Bot.">
        <title>Phylogenetic relationships in Pleurothallidinae (Orchidaceae): combined evidence from nuclear and plastid DNA sequences.</title>
        <authorList>
            <person name="Pridgeon A.M."/>
            <person name="Solano R."/>
            <person name="Chase M.W."/>
        </authorList>
    </citation>
    <scope>NUCLEOTIDE SEQUENCE [GENOMIC DNA]</scope>
</reference>
<organism>
    <name type="scientific">Arpophyllum giganteum</name>
    <name type="common">Hyacinth orchid</name>
    <dbReference type="NCBI Taxonomy" id="38181"/>
    <lineage>
        <taxon>Eukaryota</taxon>
        <taxon>Viridiplantae</taxon>
        <taxon>Streptophyta</taxon>
        <taxon>Embryophyta</taxon>
        <taxon>Tracheophyta</taxon>
        <taxon>Spermatophyta</taxon>
        <taxon>Magnoliopsida</taxon>
        <taxon>Liliopsida</taxon>
        <taxon>Asparagales</taxon>
        <taxon>Orchidaceae</taxon>
        <taxon>Epidendroideae</taxon>
        <taxon>Epidendreae</taxon>
        <taxon>Laeliinae</taxon>
        <taxon>Arpophyllum</taxon>
    </lineage>
</organism>
<name>MATK_ARPGI</name>
<evidence type="ECO:0000255" key="1">
    <source>
        <dbReference type="HAMAP-Rule" id="MF_01390"/>
    </source>
</evidence>
<gene>
    <name evidence="1" type="primary">matK</name>
</gene>
<comment type="function">
    <text evidence="1">Usually encoded in the trnK tRNA gene intron. Probably assists in splicing its own and other chloroplast group II introns.</text>
</comment>
<comment type="subcellular location">
    <subcellularLocation>
        <location>Plastid</location>
        <location>Chloroplast</location>
    </subcellularLocation>
</comment>
<comment type="similarity">
    <text evidence="1">Belongs to the intron maturase 2 family. MatK subfamily.</text>
</comment>
<protein>
    <recommendedName>
        <fullName evidence="1">Maturase K</fullName>
    </recommendedName>
    <alternativeName>
        <fullName evidence="1">Intron maturase</fullName>
    </alternativeName>
</protein>
<geneLocation type="chloroplast"/>
<accession>Q8WJR9</accession>
<dbReference type="EMBL" id="AF265485">
    <property type="protein sequence ID" value="AAL60295.1"/>
    <property type="molecule type" value="Genomic_DNA"/>
</dbReference>
<dbReference type="GO" id="GO:0009507">
    <property type="term" value="C:chloroplast"/>
    <property type="evidence" value="ECO:0007669"/>
    <property type="project" value="UniProtKB-SubCell"/>
</dbReference>
<dbReference type="GO" id="GO:0003723">
    <property type="term" value="F:RNA binding"/>
    <property type="evidence" value="ECO:0007669"/>
    <property type="project" value="UniProtKB-KW"/>
</dbReference>
<dbReference type="GO" id="GO:0006397">
    <property type="term" value="P:mRNA processing"/>
    <property type="evidence" value="ECO:0007669"/>
    <property type="project" value="UniProtKB-KW"/>
</dbReference>
<dbReference type="GO" id="GO:0008033">
    <property type="term" value="P:tRNA processing"/>
    <property type="evidence" value="ECO:0007669"/>
    <property type="project" value="UniProtKB-KW"/>
</dbReference>
<dbReference type="HAMAP" id="MF_01390">
    <property type="entry name" value="MatK"/>
    <property type="match status" value="1"/>
</dbReference>
<dbReference type="InterPro" id="IPR024937">
    <property type="entry name" value="Domain_X"/>
</dbReference>
<dbReference type="InterPro" id="IPR002866">
    <property type="entry name" value="Maturase_MatK"/>
</dbReference>
<dbReference type="InterPro" id="IPR024942">
    <property type="entry name" value="Maturase_MatK_N"/>
</dbReference>
<dbReference type="PANTHER" id="PTHR34811">
    <property type="entry name" value="MATURASE K"/>
    <property type="match status" value="1"/>
</dbReference>
<dbReference type="PANTHER" id="PTHR34811:SF1">
    <property type="entry name" value="MATURASE K"/>
    <property type="match status" value="1"/>
</dbReference>
<dbReference type="Pfam" id="PF01348">
    <property type="entry name" value="Intron_maturas2"/>
    <property type="match status" value="1"/>
</dbReference>
<dbReference type="Pfam" id="PF01824">
    <property type="entry name" value="MatK_N"/>
    <property type="match status" value="1"/>
</dbReference>
<feature type="chain" id="PRO_0000143256" description="Maturase K">
    <location>
        <begin position="1" status="less than"/>
        <end position="509"/>
    </location>
</feature>
<feature type="non-terminal residue">
    <location>
        <position position="1"/>
    </location>
</feature>
<keyword id="KW-0150">Chloroplast</keyword>
<keyword id="KW-0507">mRNA processing</keyword>
<keyword id="KW-0934">Plastid</keyword>
<keyword id="KW-0694">RNA-binding</keyword>
<keyword id="KW-0819">tRNA processing</keyword>
<proteinExistence type="inferred from homology"/>